<evidence type="ECO:0000250" key="1">
    <source>
        <dbReference type="UniProtKB" id="Q01860"/>
    </source>
</evidence>
<evidence type="ECO:0000255" key="2">
    <source>
        <dbReference type="PROSITE-ProRule" id="PRU00108"/>
    </source>
</evidence>
<evidence type="ECO:0000255" key="3">
    <source>
        <dbReference type="PROSITE-ProRule" id="PRU00530"/>
    </source>
</evidence>
<evidence type="ECO:0000256" key="4">
    <source>
        <dbReference type="SAM" id="MobiDB-lite"/>
    </source>
</evidence>
<evidence type="ECO:0000269" key="5">
    <source>
    </source>
</evidence>
<evidence type="ECO:0000269" key="6">
    <source>
    </source>
</evidence>
<evidence type="ECO:0000269" key="7">
    <source>
    </source>
</evidence>
<evidence type="ECO:0000269" key="8">
    <source>
    </source>
</evidence>
<evidence type="ECO:0000269" key="9">
    <source ref="3"/>
</evidence>
<evidence type="ECO:0000305" key="10"/>
<proteinExistence type="evidence at protein level"/>
<keyword id="KW-0010">Activator</keyword>
<keyword id="KW-0963">Cytoplasm</keyword>
<keyword id="KW-0238">DNA-binding</keyword>
<keyword id="KW-0371">Homeobox</keyword>
<keyword id="KW-0539">Nucleus</keyword>
<keyword id="KW-0597">Phosphoprotein</keyword>
<keyword id="KW-1185">Reference proteome</keyword>
<keyword id="KW-0804">Transcription</keyword>
<keyword id="KW-0805">Transcription regulation</keyword>
<feature type="chain" id="PRO_0000100753" description="POU domain, class 5, transcription factor 1B">
    <location>
        <begin position="1"/>
        <end position="359"/>
    </location>
</feature>
<feature type="domain" description="POU-specific" evidence="3">
    <location>
        <begin position="138"/>
        <end position="212"/>
    </location>
</feature>
<feature type="DNA-binding region" description="Homeobox" evidence="2">
    <location>
        <begin position="229"/>
        <end position="288"/>
    </location>
</feature>
<feature type="region of interest" description="Disordered" evidence="4">
    <location>
        <begin position="1"/>
        <end position="53"/>
    </location>
</feature>
<feature type="region of interest" description="Disordered" evidence="4">
    <location>
        <begin position="87"/>
        <end position="116"/>
    </location>
</feature>
<feature type="region of interest" description="Disordered" evidence="4">
    <location>
        <begin position="287"/>
        <end position="322"/>
    </location>
</feature>
<feature type="compositionally biased region" description="Low complexity" evidence="4">
    <location>
        <begin position="299"/>
        <end position="309"/>
    </location>
</feature>
<feature type="modified residue" description="Phosphoserine" evidence="1">
    <location>
        <position position="111"/>
    </location>
</feature>
<feature type="modified residue" description="Phosphothreonine" evidence="1">
    <location>
        <position position="235"/>
    </location>
</feature>
<feature type="modified residue" description="Phosphoserine" evidence="1">
    <location>
        <position position="236"/>
    </location>
</feature>
<feature type="modified residue" description="Phosphoserine" evidence="1">
    <location>
        <position position="288"/>
    </location>
</feature>
<feature type="modified residue" description="Phosphoserine" evidence="1">
    <location>
        <position position="289"/>
    </location>
</feature>
<feature type="modified residue" description="Phosphoserine" evidence="1">
    <location>
        <position position="354"/>
    </location>
</feature>
<feature type="sequence variant" id="VAR_067432" description="In dbSNP:rs1061394." evidence="8">
    <original>L</original>
    <variation>R</variation>
    <location>
        <position position="33"/>
    </location>
</feature>
<feature type="sequence variant" id="VAR_067433" description="In dbSNP:rs1061395.">
    <original>L</original>
    <variation>F</variation>
    <location>
        <position position="69"/>
    </location>
</feature>
<feature type="sequence variant" id="VAR_067434" description="In dbSNP:rs6998061." evidence="8">
    <original>G</original>
    <variation>E</variation>
    <location>
        <position position="176"/>
    </location>
</feature>
<feature type="sequence variant" id="VAR_067435" description="In dbSNP:rs13273814." evidence="8 9">
    <original>K</original>
    <variation>T</variation>
    <location>
        <position position="182"/>
    </location>
</feature>
<feature type="sequence variant" id="VAR_067436" description="In dbSNP:rs13274084." evidence="8 9">
    <original>N</original>
    <variation>D</variation>
    <location>
        <position position="214"/>
    </location>
</feature>
<feature type="sequence variant" id="VAR_067437" description="In dbSNP:rs7002225." evidence="8">
    <original>E</original>
    <variation>Q</variation>
    <location>
        <position position="238"/>
    </location>
</feature>
<feature type="sequence variant" id="VAR_067438" description="In dbSNP:rs556361752.">
    <original>P</original>
    <variation>L</variation>
    <location>
        <position position="313"/>
    </location>
</feature>
<feature type="sequence conflict" description="In Ref. 5; ADE48599." evidence="10" ref="5">
    <original>A</original>
    <variation>T</variation>
    <location>
        <position position="10"/>
    </location>
</feature>
<feature type="sequence conflict" description="In Ref. 5; ADE48609/ADW77452." evidence="10" ref="5">
    <original>P</original>
    <variation>L</variation>
    <location>
        <position position="13"/>
    </location>
</feature>
<feature type="sequence conflict" description="In Ref. 5; ADW77351." evidence="10" ref="5">
    <original>P</original>
    <variation>T</variation>
    <location>
        <position position="14"/>
    </location>
</feature>
<feature type="sequence conflict" description="In Ref. 5; ADE48566/ADE48597." evidence="10" ref="5">
    <original>WGA</original>
    <variation>GGP</variation>
    <location>
        <begin position="23"/>
        <end position="25"/>
    </location>
</feature>
<feature type="sequence conflict" description="In Ref. 5; ADE48567." evidence="10" ref="5">
    <original>D</original>
    <variation>G</variation>
    <location>
        <position position="31"/>
    </location>
</feature>
<feature type="sequence conflict" description="In Ref. 5; ADE48570." evidence="10" ref="5">
    <original>D</original>
    <variation>V</variation>
    <location>
        <position position="31"/>
    </location>
</feature>
<feature type="sequence conflict" description="In Ref. 5; ADW77415/ADW77416/ADW77417/ADW77420/ADW77421." evidence="10" ref="5">
    <original>W</original>
    <variation>R</variation>
    <location>
        <position position="35"/>
    </location>
</feature>
<feature type="sequence conflict" description="In Ref. 5; ADE48583." evidence="10" ref="5">
    <original>Q</original>
    <variation>R</variation>
    <location>
        <position position="39"/>
    </location>
</feature>
<feature type="sequence conflict" description="In Ref. 5; ADW77445." evidence="10" ref="5">
    <original>C</original>
    <variation>R</variation>
    <location>
        <position position="76"/>
    </location>
</feature>
<feature type="sequence conflict" description="In Ref. 5; ADW77469." evidence="10" ref="5">
    <original>Q</original>
    <variation>H</variation>
    <location>
        <position position="79"/>
    </location>
</feature>
<feature type="sequence conflict" description="In Ref. 5; ADE48610/ADW77455." evidence="10" ref="5">
    <original>E</original>
    <variation>V</variation>
    <location>
        <position position="91"/>
    </location>
</feature>
<feature type="sequence conflict" description="In Ref. 5; ADE48612." evidence="10" ref="5">
    <original>N</original>
    <variation>S</variation>
    <location>
        <position position="106"/>
    </location>
</feature>
<feature type="sequence conflict" description="In Ref. 5; ADW77513/ADW77518." evidence="10" ref="5">
    <original>S</original>
    <variation>Y</variation>
    <location>
        <position position="107"/>
    </location>
</feature>
<feature type="sequence conflict" description="In Ref. 5; ADE48580." evidence="10" ref="5">
    <original>L</original>
    <variation>Q</variation>
    <location>
        <position position="129"/>
    </location>
</feature>
<feature type="sequence conflict" description="In Ref. 5; ADW77492." evidence="10" ref="5">
    <original>E</original>
    <variation>G</variation>
    <location>
        <position position="130"/>
    </location>
</feature>
<feature type="sequence conflict" description="In Ref. 5; ADW77447." evidence="10" ref="5">
    <original>N</original>
    <variation>D</variation>
    <location>
        <position position="132"/>
    </location>
</feature>
<feature type="sequence conflict" description="In Ref. 5; ADE48599." evidence="10" ref="5">
    <original>D</original>
    <variation>G</variation>
    <location>
        <position position="138"/>
    </location>
</feature>
<feature type="sequence conflict" description="In Ref. 5; ADE48616." evidence="10" ref="5">
    <original>A</original>
    <variation>T</variation>
    <location>
        <position position="150"/>
    </location>
</feature>
<feature type="sequence conflict" description="In Ref. 5; ADW77351." evidence="10" ref="5">
    <original>L</original>
    <variation>F</variation>
    <location>
        <position position="152"/>
    </location>
</feature>
<feature type="sequence conflict" description="In Ref. 5; ADW77490/ADW77499/ADW77502/ADW77503." evidence="10" ref="5">
    <original>Q</original>
    <variation>R</variation>
    <location>
        <position position="155"/>
    </location>
</feature>
<feature type="sequence conflict" description="In Ref. 5; ADW77417." evidence="10" ref="5">
    <original>L</original>
    <variation>P</variation>
    <location>
        <position position="160"/>
    </location>
</feature>
<feature type="sequence conflict" description="In Ref. 5; ADE48580." evidence="10" ref="5">
    <original>T</original>
    <variation>A</variation>
    <location>
        <position position="163"/>
    </location>
</feature>
<feature type="sequence conflict" description="In Ref. 5; ADW77415/ADW77420/ADW77421." evidence="10" ref="5">
    <original>L</original>
    <variation>F</variation>
    <location>
        <position position="169"/>
    </location>
</feature>
<feature type="sequence conflict" description="In Ref. 5; ADE48561." evidence="10" ref="5">
    <original>L</original>
    <variation>P</variation>
    <location>
        <position position="169"/>
    </location>
</feature>
<feature type="sequence conflict" description="In Ref. 5; ADE48583." evidence="10" ref="5">
    <original>L</original>
    <variation>R</variation>
    <location>
        <position position="169"/>
    </location>
</feature>
<feature type="sequence conflict" description="In Ref. 5; ADW77492." evidence="10" ref="5">
    <original>N</original>
    <variation>D</variation>
    <location>
        <position position="196"/>
    </location>
</feature>
<feature type="sequence conflict" description="In Ref. 1; CAA77953." evidence="10" ref="1">
    <original>M</original>
    <variation>I</variation>
    <location>
        <position position="197"/>
    </location>
</feature>
<feature type="sequence conflict" description="In Ref. 5; ADE48615." evidence="10" ref="5">
    <original>R</original>
    <variation>W</variation>
    <location>
        <position position="201"/>
    </location>
</feature>
<feature type="sequence conflict" description="In Ref. 5; ADW77493/ADW77501/ADW77506." evidence="10" ref="5">
    <original>V</original>
    <variation>E</variation>
    <location>
        <position position="208"/>
    </location>
</feature>
<feature type="sequence conflict" description="In Ref. 5; ADE48593/ADW77355/ADW77358/ADW77387/ADW77418/ADW77423." evidence="10" ref="5">
    <original>A</original>
    <variation>T</variation>
    <location>
        <position position="211"/>
    </location>
</feature>
<feature type="sequence conflict" description="In Ref. 5; ADW77518/ADW77513." evidence="10" ref="5">
    <original>T</original>
    <variation>A</variation>
    <location>
        <position position="235"/>
    </location>
</feature>
<feature type="sequence conflict" description="In Ref. 5; ADW77488/ADW77496/ADW77504/ADW77507." evidence="10" ref="5">
    <original>V</original>
    <variation>M</variation>
    <location>
        <position position="241"/>
    </location>
</feature>
<feature type="sequence conflict" description="In Ref. 5; ADW77492." evidence="10" ref="5">
    <original>E</original>
    <variation>G</variation>
    <location>
        <position position="246"/>
    </location>
</feature>
<feature type="sequence conflict" description="In Ref. 5; ADW77474/ADW77481." evidence="10" ref="5">
    <original>F</original>
    <variation>L</variation>
    <location>
        <position position="249"/>
    </location>
</feature>
<feature type="sequence conflict" description="In Ref. 5; ADE48580." evidence="10" ref="5">
    <original>L</original>
    <variation>P</variation>
    <location>
        <position position="250"/>
    </location>
</feature>
<feature type="sequence conflict" description="In Ref. 5; ADW77475." evidence="10" ref="5">
    <original>L</original>
    <variation>Q</variation>
    <location>
        <position position="250"/>
    </location>
</feature>
<feature type="sequence conflict" description="In Ref. 5; ADW77488/ADW77496/ADW77504/ADW77507." evidence="10" ref="5">
    <original>I</original>
    <variation>T</variation>
    <location>
        <position position="259"/>
    </location>
</feature>
<feature type="sequence conflict" description="In Ref. 5; ADE48609/ADW77452." evidence="10" ref="5">
    <original>Q</original>
    <variation>H</variation>
    <location>
        <position position="264"/>
    </location>
</feature>
<feature type="sequence conflict" description="In Ref. 5; ADW77477/ADW77476/ADW77467." evidence="10" ref="5">
    <original>Q</original>
    <variation>L</variation>
    <location>
        <position position="264"/>
    </location>
</feature>
<feature type="sequence conflict" description="In Ref. 5; ADW77472/ADW77479." evidence="10" ref="5">
    <original>V</original>
    <variation>M</variation>
    <location>
        <position position="272"/>
    </location>
</feature>
<feature type="sequence conflict" description="In Ref. 5; ADW77495." evidence="10" ref="5">
    <original>WFC</original>
    <variation>CFG</variation>
    <location>
        <begin position="276"/>
        <end position="278"/>
    </location>
</feature>
<feature type="sequence conflict" description="In Ref. 5; ADW77494." evidence="10" ref="5">
    <original>Q</original>
    <variation>R</variation>
    <location>
        <position position="282"/>
    </location>
</feature>
<feature type="sequence conflict" description="In Ref. 5; ADW77469." evidence="10" ref="5">
    <original>G</original>
    <variation>S</variation>
    <location>
        <position position="284"/>
    </location>
</feature>
<feature type="sequence conflict" description="In Ref. 5; ADE48583." evidence="10" ref="5">
    <original>E</original>
    <variation>V</variation>
    <location>
        <position position="295"/>
    </location>
</feature>
<feature type="sequence conflict" description="In Ref. 5; ADW77444/ADW77445." evidence="10" ref="5">
    <original>H</original>
    <variation>Q</variation>
    <location>
        <position position="318"/>
    </location>
</feature>
<feature type="sequence conflict" description="In Ref. 5; ADW77476/ADW77467/ADW77477." evidence="10" ref="5">
    <original>T</original>
    <variation>I</variation>
    <location>
        <position position="321"/>
    </location>
</feature>
<feature type="sequence conflict" description="In Ref. 5; ADW77444/ADW77445." evidence="10" ref="5">
    <original>S</original>
    <variation>G</variation>
    <location>
        <position position="326"/>
    </location>
</feature>
<feature type="sequence conflict" description="In Ref. 5; ADW77447/ADW77448/ADW77451." evidence="10" ref="5">
    <original>A</original>
    <variation>T</variation>
    <location>
        <position position="331"/>
    </location>
</feature>
<feature type="sequence conflict" description="In Ref. 5; ADE48570." evidence="10" ref="5">
    <original>E</original>
    <variation>V</variation>
    <location>
        <position position="340"/>
    </location>
</feature>
<accession>Q06416</accession>
<accession>D5K9S4</accession>
<accession>D5K9S9</accession>
<accession>D5K9T0</accession>
<accession>D5K9T1</accession>
<accession>D5K9T3</accession>
<accession>D5K9U3</accession>
<accession>D5K9U6</accession>
<accession>D5K9V4</accession>
<accession>D5K9V6</accession>
<accession>D5K9W0</accession>
<accession>D5K9W2</accession>
<accession>D5K9W7</accession>
<accession>D5K9X2</accession>
<accession>D5K9X3</accession>
<accession>D5K9X5</accession>
<accession>D5K9X8</accession>
<accession>D5K9X9</accession>
<accession>E9LRB1</accession>
<accession>E9LRB2</accession>
<accession>E9LRH5</accession>
<accession>E9LRH6</accession>
<accession>E9LRH7</accession>
<accession>E9LRK4</accession>
<accession>E9LRK5</accession>
<accession>E9LRK7</accession>
<accession>E9LRK8</accession>
<accession>E9LRM7</accession>
<accession>E9LRM9</accession>
<accession>E9LRN2</accession>
<accession>E9LRN4</accession>
<accession>E9LRN5</accession>
<accession>E9LRP8</accession>
<accession>E9LRQ0</accession>
<accession>E9LRQ2</accession>
<accession>E9LRQ3</accession>
<accession>E9LRQ4</accession>
<accession>E9LRQ5</accession>
<accession>E9LRS3</accession>
<accession>Q2VIK6</accession>
<accession>Q9BZV7</accession>
<accession>Q9BZV9</accession>
<protein>
    <recommendedName>
        <fullName>POU domain, class 5, transcription factor 1B</fullName>
    </recommendedName>
    <alternativeName>
        <fullName>Oct4-pg1</fullName>
    </alternativeName>
    <alternativeName>
        <fullName>Octamer-binding protein 3-like</fullName>
    </alternativeName>
    <alternativeName>
        <fullName>Octamer-binding transcription factor 3-like</fullName>
    </alternativeName>
</protein>
<gene>
    <name type="primary">POU5F1B</name>
    <name type="synonym">OCT4PG1</name>
    <name type="synonym">OTF3C</name>
    <name type="synonym">OTF3P1</name>
    <name type="synonym">POU5F1P1</name>
    <name type="synonym">POU5FLC20</name>
    <name type="synonym">POU5FLC8</name>
</gene>
<sequence>MAGHLASDFAFSPPPGGGGDGPWGAEPGWVDPLTWLSFQGPPGGPGIGPGVGPGSEVWGIPPCPPPYELCGGMAYCGPQVGVGLVPQGGLETSQPESEAGVGVESNSNGASPEPCTVPPGAVKLEKEKLEQNPEKSQDIKALQKELEQFAKLLKQKRITLGYTQADVGLILGVLFGKVFSQKTICRFEALQLSFKNMCKLRPLLQKWVEEADNNENLQEICKAETLMQARKRKRTSIENRVRGNLENLFLQCPKPTLQISHIAQQLGLEKDVVRVWFCNRRQKGKRSSSDYAQREDFEAAGSPFSGGPVSFPPAPGPHFGTPGYGSPHFTALYSSVPFPEGEVFPPVSVITLGSPMHSN</sequence>
<comment type="function">
    <text evidence="6">Shows weak transcriptional activator activity.</text>
</comment>
<comment type="subcellular location">
    <subcellularLocation>
        <location evidence="2 3 6">Nucleus</location>
    </subcellularLocation>
    <subcellularLocation>
        <location evidence="7">Cytoplasm</location>
    </subcellularLocation>
</comment>
<comment type="tissue specificity">
    <text evidence="5 7 8">Detected in epithelial cells of the prostate (at protein level) (PubMed:20017164). Detected at the mRNA level in several cancer tissues (breast, uterine cervix, lung, thyroid gland, esophagus, colon, urinary bladder, and glioma) (PubMed:16229821, PubMed:21341266).</text>
</comment>
<comment type="similarity">
    <text evidence="10">Belongs to the POU transcription factor family. Class-5 subfamily.</text>
</comment>
<name>P5F1B_HUMAN</name>
<organism>
    <name type="scientific">Homo sapiens</name>
    <name type="common">Human</name>
    <dbReference type="NCBI Taxonomy" id="9606"/>
    <lineage>
        <taxon>Eukaryota</taxon>
        <taxon>Metazoa</taxon>
        <taxon>Chordata</taxon>
        <taxon>Craniata</taxon>
        <taxon>Vertebrata</taxon>
        <taxon>Euteleostomi</taxon>
        <taxon>Mammalia</taxon>
        <taxon>Eutheria</taxon>
        <taxon>Euarchontoglires</taxon>
        <taxon>Primates</taxon>
        <taxon>Haplorrhini</taxon>
        <taxon>Catarrhini</taxon>
        <taxon>Hominidae</taxon>
        <taxon>Homo</taxon>
    </lineage>
</organism>
<dbReference type="EMBL" id="Z11901">
    <property type="protein sequence ID" value="CAA77953.1"/>
    <property type="molecule type" value="Genomic_DNA"/>
</dbReference>
<dbReference type="EMBL" id="DQ120688">
    <property type="protein sequence ID" value="ABB92462.1"/>
    <property type="molecule type" value="Genomic_DNA"/>
</dbReference>
<dbReference type="EMBL" id="AF268615">
    <property type="protein sequence ID" value="AAG53083.1"/>
    <property type="molecule type" value="mRNA"/>
</dbReference>
<dbReference type="EMBL" id="AF268618">
    <property type="protein sequence ID" value="AAG53085.1"/>
    <property type="molecule type" value="mRNA"/>
</dbReference>
<dbReference type="EMBL" id="DQ486513">
    <property type="protein sequence ID" value="ABF29403.1"/>
    <property type="molecule type" value="mRNA"/>
</dbReference>
<dbReference type="EMBL" id="GU480835">
    <property type="protein sequence ID" value="ADE48561.1"/>
    <property type="molecule type" value="mRNA"/>
</dbReference>
<dbReference type="EMBL" id="GU480840">
    <property type="protein sequence ID" value="ADE48566.1"/>
    <property type="molecule type" value="mRNA"/>
</dbReference>
<dbReference type="EMBL" id="GU480841">
    <property type="protein sequence ID" value="ADE48567.1"/>
    <property type="molecule type" value="mRNA"/>
</dbReference>
<dbReference type="EMBL" id="GU480842">
    <property type="protein sequence ID" value="ADE48568.1"/>
    <property type="molecule type" value="mRNA"/>
</dbReference>
<dbReference type="EMBL" id="GU480845">
    <property type="protein sequence ID" value="ADE48570.1"/>
    <property type="molecule type" value="mRNA"/>
</dbReference>
<dbReference type="EMBL" id="GU480864">
    <property type="protein sequence ID" value="ADE48580.1"/>
    <property type="molecule type" value="mRNA"/>
</dbReference>
<dbReference type="EMBL" id="GU480868">
    <property type="protein sequence ID" value="ADE48583.1"/>
    <property type="molecule type" value="mRNA"/>
</dbReference>
<dbReference type="EMBL" id="GU480878">
    <property type="protein sequence ID" value="ADE48591.1"/>
    <property type="molecule type" value="mRNA"/>
</dbReference>
<dbReference type="EMBL" id="GU480880">
    <property type="protein sequence ID" value="ADE48593.1"/>
    <property type="molecule type" value="mRNA"/>
</dbReference>
<dbReference type="EMBL" id="GU480883">
    <property type="protein sequence ID" value="ADE48596.1"/>
    <property type="molecule type" value="mRNA"/>
</dbReference>
<dbReference type="EMBL" id="GU480886">
    <property type="protein sequence ID" value="ADE48597.1"/>
    <property type="molecule type" value="mRNA"/>
</dbReference>
<dbReference type="EMBL" id="GU480889">
    <property type="protein sequence ID" value="ADE48599.1"/>
    <property type="molecule type" value="mRNA"/>
</dbReference>
<dbReference type="EMBL" id="GU480896">
    <property type="protein sequence ID" value="ADE48604.1"/>
    <property type="molecule type" value="mRNA"/>
</dbReference>
<dbReference type="EMBL" id="GU480902">
    <property type="protein sequence ID" value="ADE48606.1"/>
    <property type="molecule type" value="mRNA"/>
</dbReference>
<dbReference type="EMBL" id="GU480905">
    <property type="protein sequence ID" value="ADE48609.1"/>
    <property type="molecule type" value="mRNA"/>
</dbReference>
<dbReference type="EMBL" id="GU480906">
    <property type="protein sequence ID" value="ADE48610.1"/>
    <property type="molecule type" value="mRNA"/>
</dbReference>
<dbReference type="EMBL" id="GU480908">
    <property type="protein sequence ID" value="ADE48612.1"/>
    <property type="molecule type" value="mRNA"/>
</dbReference>
<dbReference type="EMBL" id="GU480911">
    <property type="protein sequence ID" value="ADE48614.1"/>
    <property type="molecule type" value="mRNA"/>
</dbReference>
<dbReference type="EMBL" id="GU480912">
    <property type="protein sequence ID" value="ADE48615.1"/>
    <property type="molecule type" value="mRNA"/>
</dbReference>
<dbReference type="EMBL" id="GU480913">
    <property type="protein sequence ID" value="ADE48616.1"/>
    <property type="molecule type" value="mRNA"/>
</dbReference>
<dbReference type="EMBL" id="HQ122710">
    <property type="protein sequence ID" value="ADW77351.1"/>
    <property type="molecule type" value="mRNA"/>
</dbReference>
<dbReference type="EMBL" id="HQ122711">
    <property type="protein sequence ID" value="ADW77352.1"/>
    <property type="molecule type" value="mRNA"/>
</dbReference>
<dbReference type="EMBL" id="HQ122712">
    <property type="protein sequence ID" value="ADW77353.1"/>
    <property type="molecule type" value="mRNA"/>
</dbReference>
<dbReference type="EMBL" id="HQ122713">
    <property type="protein sequence ID" value="ADW77354.1"/>
    <property type="molecule type" value="mRNA"/>
</dbReference>
<dbReference type="EMBL" id="HQ122714">
    <property type="protein sequence ID" value="ADW77355.1"/>
    <property type="molecule type" value="mRNA"/>
</dbReference>
<dbReference type="EMBL" id="HQ122716">
    <property type="protein sequence ID" value="ADW77356.1"/>
    <property type="molecule type" value="mRNA"/>
</dbReference>
<dbReference type="EMBL" id="HQ122717">
    <property type="protein sequence ID" value="ADW77357.1"/>
    <property type="molecule type" value="mRNA"/>
</dbReference>
<dbReference type="EMBL" id="HQ122718">
    <property type="protein sequence ID" value="ADW77358.1"/>
    <property type="molecule type" value="mRNA"/>
</dbReference>
<dbReference type="EMBL" id="HQ122719">
    <property type="protein sequence ID" value="ADW77359.1"/>
    <property type="molecule type" value="mRNA"/>
</dbReference>
<dbReference type="EMBL" id="HQ122721">
    <property type="protein sequence ID" value="ADW77360.1"/>
    <property type="molecule type" value="mRNA"/>
</dbReference>
<dbReference type="EMBL" id="HQ122749">
    <property type="protein sequence ID" value="ADW77385.1"/>
    <property type="molecule type" value="mRNA"/>
</dbReference>
<dbReference type="EMBL" id="HQ122750">
    <property type="protein sequence ID" value="ADW77386.1"/>
    <property type="molecule type" value="mRNA"/>
</dbReference>
<dbReference type="EMBL" id="HQ122751">
    <property type="protein sequence ID" value="ADW77387.1"/>
    <property type="molecule type" value="mRNA"/>
</dbReference>
<dbReference type="EMBL" id="HQ122752">
    <property type="protein sequence ID" value="ADW77388.1"/>
    <property type="molecule type" value="mRNA"/>
</dbReference>
<dbReference type="EMBL" id="HQ122781">
    <property type="protein sequence ID" value="ADW77415.1"/>
    <property type="molecule type" value="mRNA"/>
</dbReference>
<dbReference type="EMBL" id="HQ122782">
    <property type="protein sequence ID" value="ADW77416.1"/>
    <property type="molecule type" value="mRNA"/>
</dbReference>
<dbReference type="EMBL" id="HQ122783">
    <property type="protein sequence ID" value="ADW77417.1"/>
    <property type="molecule type" value="mRNA"/>
</dbReference>
<dbReference type="EMBL" id="HQ122784">
    <property type="protein sequence ID" value="ADW77418.1"/>
    <property type="molecule type" value="mRNA"/>
</dbReference>
<dbReference type="EMBL" id="HQ122785">
    <property type="protein sequence ID" value="ADW77419.1"/>
    <property type="molecule type" value="mRNA"/>
</dbReference>
<dbReference type="EMBL" id="HQ122786">
    <property type="protein sequence ID" value="ADW77420.1"/>
    <property type="molecule type" value="mRNA"/>
</dbReference>
<dbReference type="EMBL" id="HQ122787">
    <property type="protein sequence ID" value="ADW77421.1"/>
    <property type="molecule type" value="mRNA"/>
</dbReference>
<dbReference type="EMBL" id="HQ122788">
    <property type="protein sequence ID" value="ADW77422.1"/>
    <property type="molecule type" value="mRNA"/>
</dbReference>
<dbReference type="EMBL" id="HQ122789">
    <property type="protein sequence ID" value="ADW77423.1"/>
    <property type="molecule type" value="mRNA"/>
</dbReference>
<dbReference type="EMBL" id="HQ122790">
    <property type="protein sequence ID" value="ADW77424.1"/>
    <property type="molecule type" value="mRNA"/>
</dbReference>
<dbReference type="EMBL" id="HQ122816">
    <property type="protein sequence ID" value="ADW77444.1"/>
    <property type="molecule type" value="mRNA"/>
</dbReference>
<dbReference type="EMBL" id="HQ122817">
    <property type="protein sequence ID" value="ADW77445.1"/>
    <property type="molecule type" value="mRNA"/>
</dbReference>
<dbReference type="EMBL" id="HQ122818">
    <property type="protein sequence ID" value="ADW77446.1"/>
    <property type="molecule type" value="mRNA"/>
</dbReference>
<dbReference type="EMBL" id="HQ122819">
    <property type="protein sequence ID" value="ADW77447.1"/>
    <property type="molecule type" value="mRNA"/>
</dbReference>
<dbReference type="EMBL" id="HQ122820">
    <property type="protein sequence ID" value="ADW77448.1"/>
    <property type="molecule type" value="mRNA"/>
</dbReference>
<dbReference type="EMBL" id="HQ122821">
    <property type="protein sequence ID" value="ADW77449.1"/>
    <property type="molecule type" value="mRNA"/>
</dbReference>
<dbReference type="EMBL" id="HQ122822">
    <property type="protein sequence ID" value="ADW77450.1"/>
    <property type="molecule type" value="mRNA"/>
</dbReference>
<dbReference type="EMBL" id="HQ122823">
    <property type="protein sequence ID" value="ADW77451.1"/>
    <property type="molecule type" value="mRNA"/>
</dbReference>
<dbReference type="EMBL" id="HQ122824">
    <property type="protein sequence ID" value="ADW77452.1"/>
    <property type="molecule type" value="mRNA"/>
</dbReference>
<dbReference type="EMBL" id="HQ122825">
    <property type="protein sequence ID" value="ADW77453.1"/>
    <property type="molecule type" value="mRNA"/>
</dbReference>
<dbReference type="EMBL" id="HQ122826">
    <property type="protein sequence ID" value="ADW77454.1"/>
    <property type="molecule type" value="mRNA"/>
</dbReference>
<dbReference type="EMBL" id="HQ122827">
    <property type="protein sequence ID" value="ADW77455.1"/>
    <property type="molecule type" value="mRNA"/>
</dbReference>
<dbReference type="EMBL" id="HQ122841">
    <property type="protein sequence ID" value="ADW77467.1"/>
    <property type="molecule type" value="mRNA"/>
</dbReference>
<dbReference type="EMBL" id="HQ122842">
    <property type="protein sequence ID" value="ADW77468.1"/>
    <property type="molecule type" value="mRNA"/>
</dbReference>
<dbReference type="EMBL" id="HQ122843">
    <property type="protein sequence ID" value="ADW77469.1"/>
    <property type="molecule type" value="mRNA"/>
</dbReference>
<dbReference type="EMBL" id="HQ122844">
    <property type="protein sequence ID" value="ADW77470.1"/>
    <property type="molecule type" value="mRNA"/>
</dbReference>
<dbReference type="EMBL" id="HQ122845">
    <property type="protein sequence ID" value="ADW77471.1"/>
    <property type="molecule type" value="mRNA"/>
</dbReference>
<dbReference type="EMBL" id="HQ122846">
    <property type="protein sequence ID" value="ADW77472.1"/>
    <property type="molecule type" value="mRNA"/>
</dbReference>
<dbReference type="EMBL" id="HQ122848">
    <property type="protein sequence ID" value="ADW77473.1"/>
    <property type="molecule type" value="mRNA"/>
</dbReference>
<dbReference type="EMBL" id="HQ122849">
    <property type="protein sequence ID" value="ADW77474.1"/>
    <property type="molecule type" value="mRNA"/>
</dbReference>
<dbReference type="EMBL" id="HQ122851">
    <property type="protein sequence ID" value="ADW77475.1"/>
    <property type="molecule type" value="mRNA"/>
</dbReference>
<dbReference type="EMBL" id="HQ122852">
    <property type="protein sequence ID" value="ADW77476.1"/>
    <property type="molecule type" value="mRNA"/>
</dbReference>
<dbReference type="EMBL" id="HQ122853">
    <property type="protein sequence ID" value="ADW77477.1"/>
    <property type="molecule type" value="mRNA"/>
</dbReference>
<dbReference type="EMBL" id="HQ122854">
    <property type="protein sequence ID" value="ADW77478.1"/>
    <property type="molecule type" value="mRNA"/>
</dbReference>
<dbReference type="EMBL" id="HQ122855">
    <property type="protein sequence ID" value="ADW77479.1"/>
    <property type="molecule type" value="mRNA"/>
</dbReference>
<dbReference type="EMBL" id="HQ122856">
    <property type="protein sequence ID" value="ADW77480.1"/>
    <property type="molecule type" value="mRNA"/>
</dbReference>
<dbReference type="EMBL" id="HQ122857">
    <property type="protein sequence ID" value="ADW77481.1"/>
    <property type="molecule type" value="mRNA"/>
</dbReference>
<dbReference type="EMBL" id="HQ122864">
    <property type="protein sequence ID" value="ADW77487.1"/>
    <property type="molecule type" value="mRNA"/>
</dbReference>
<dbReference type="EMBL" id="HQ122865">
    <property type="protein sequence ID" value="ADW77488.1"/>
    <property type="molecule type" value="mRNA"/>
</dbReference>
<dbReference type="EMBL" id="HQ122866">
    <property type="protein sequence ID" value="ADW77489.1"/>
    <property type="molecule type" value="mRNA"/>
</dbReference>
<dbReference type="EMBL" id="HQ122867">
    <property type="protein sequence ID" value="ADW77490.1"/>
    <property type="molecule type" value="mRNA"/>
</dbReference>
<dbReference type="EMBL" id="HQ122868">
    <property type="protein sequence ID" value="ADW77491.1"/>
    <property type="molecule type" value="mRNA"/>
</dbReference>
<dbReference type="EMBL" id="HQ122869">
    <property type="protein sequence ID" value="ADW77492.1"/>
    <property type="molecule type" value="mRNA"/>
</dbReference>
<dbReference type="EMBL" id="HQ122870">
    <property type="protein sequence ID" value="ADW77493.1"/>
    <property type="molecule type" value="mRNA"/>
</dbReference>
<dbReference type="EMBL" id="HQ122871">
    <property type="protein sequence ID" value="ADW77494.1"/>
    <property type="molecule type" value="mRNA"/>
</dbReference>
<dbReference type="EMBL" id="HQ122874">
    <property type="protein sequence ID" value="ADW77495.1"/>
    <property type="molecule type" value="mRNA"/>
</dbReference>
<dbReference type="EMBL" id="HQ122876">
    <property type="protein sequence ID" value="ADW77496.1"/>
    <property type="molecule type" value="mRNA"/>
</dbReference>
<dbReference type="EMBL" id="HQ122877">
    <property type="protein sequence ID" value="ADW77497.1"/>
    <property type="molecule type" value="mRNA"/>
</dbReference>
<dbReference type="EMBL" id="HQ122878">
    <property type="protein sequence ID" value="ADW77498.1"/>
    <property type="molecule type" value="mRNA"/>
</dbReference>
<dbReference type="EMBL" id="HQ122879">
    <property type="protein sequence ID" value="ADW77499.1"/>
    <property type="molecule type" value="mRNA"/>
</dbReference>
<dbReference type="EMBL" id="HQ122880">
    <property type="protein sequence ID" value="ADW77500.1"/>
    <property type="molecule type" value="mRNA"/>
</dbReference>
<dbReference type="EMBL" id="HQ122881">
    <property type="protein sequence ID" value="ADW77501.1"/>
    <property type="molecule type" value="mRNA"/>
</dbReference>
<dbReference type="EMBL" id="HQ122882">
    <property type="protein sequence ID" value="ADW77502.1"/>
    <property type="molecule type" value="mRNA"/>
</dbReference>
<dbReference type="EMBL" id="HQ122883">
    <property type="protein sequence ID" value="ADW77503.1"/>
    <property type="molecule type" value="mRNA"/>
</dbReference>
<dbReference type="EMBL" id="HQ122884">
    <property type="protein sequence ID" value="ADW77504.1"/>
    <property type="molecule type" value="mRNA"/>
</dbReference>
<dbReference type="EMBL" id="HQ122885">
    <property type="protein sequence ID" value="ADW77505.1"/>
    <property type="molecule type" value="mRNA"/>
</dbReference>
<dbReference type="EMBL" id="HQ122886">
    <property type="protein sequence ID" value="ADW77506.1"/>
    <property type="molecule type" value="mRNA"/>
</dbReference>
<dbReference type="EMBL" id="HQ122887">
    <property type="protein sequence ID" value="ADW77507.1"/>
    <property type="molecule type" value="mRNA"/>
</dbReference>
<dbReference type="EMBL" id="HQ122891">
    <property type="protein sequence ID" value="ADW77511.1"/>
    <property type="molecule type" value="mRNA"/>
</dbReference>
<dbReference type="EMBL" id="HQ122892">
    <property type="protein sequence ID" value="ADW77512.1"/>
    <property type="molecule type" value="mRNA"/>
</dbReference>
<dbReference type="EMBL" id="HQ122893">
    <property type="protein sequence ID" value="ADW77513.1"/>
    <property type="molecule type" value="mRNA"/>
</dbReference>
<dbReference type="EMBL" id="HQ122895">
    <property type="protein sequence ID" value="ADW77514.1"/>
    <property type="molecule type" value="mRNA"/>
</dbReference>
<dbReference type="EMBL" id="HQ122898">
    <property type="protein sequence ID" value="ADW77515.1"/>
    <property type="molecule type" value="mRNA"/>
</dbReference>
<dbReference type="EMBL" id="HQ122900">
    <property type="protein sequence ID" value="ADW77516.1"/>
    <property type="molecule type" value="mRNA"/>
</dbReference>
<dbReference type="EMBL" id="HQ122902">
    <property type="protein sequence ID" value="ADW77517.1"/>
    <property type="molecule type" value="mRNA"/>
</dbReference>
<dbReference type="EMBL" id="HQ122903">
    <property type="protein sequence ID" value="ADW77518.1"/>
    <property type="molecule type" value="mRNA"/>
</dbReference>
<dbReference type="EMBL" id="AC016883">
    <property type="status" value="NOT_ANNOTATED_CDS"/>
    <property type="molecule type" value="Genomic_DNA"/>
</dbReference>
<dbReference type="CCDS" id="CCDS55274.1"/>
<dbReference type="RefSeq" id="NP_001153014.1">
    <property type="nucleotide sequence ID" value="NM_001159542.3"/>
</dbReference>
<dbReference type="RefSeq" id="NP_001382674.1">
    <property type="nucleotide sequence ID" value="NM_001395745.1"/>
</dbReference>
<dbReference type="SMR" id="Q06416"/>
<dbReference type="FunCoup" id="Q06416">
    <property type="interactions" value="132"/>
</dbReference>
<dbReference type="STRING" id="9606.ENSP00000419298"/>
<dbReference type="GlyGen" id="Q06416">
    <property type="glycosylation" value="1 site, 1 O-linked glycan (1 site)"/>
</dbReference>
<dbReference type="iPTMnet" id="Q06416"/>
<dbReference type="PhosphoSitePlus" id="Q06416"/>
<dbReference type="BioMuta" id="POU5F1B"/>
<dbReference type="DMDM" id="357528826"/>
<dbReference type="jPOST" id="Q06416"/>
<dbReference type="MassIVE" id="Q06416"/>
<dbReference type="PaxDb" id="9606-ENSP00000419298"/>
<dbReference type="PeptideAtlas" id="Q06416"/>
<dbReference type="Antibodypedia" id="54266">
    <property type="antibodies" value="100 antibodies from 21 providers"/>
</dbReference>
<dbReference type="DNASU" id="5462"/>
<dbReference type="Ensembl" id="ENST00000465342.4">
    <property type="protein sequence ID" value="ENSP00000419298.2"/>
    <property type="gene ID" value="ENSG00000212993.6"/>
</dbReference>
<dbReference type="Ensembl" id="ENST00000645438.1">
    <property type="protein sequence ID" value="ENSP00000495779.1"/>
    <property type="gene ID" value="ENSG00000212993.6"/>
</dbReference>
<dbReference type="Ensembl" id="ENST00000696633.1">
    <property type="protein sequence ID" value="ENSP00000512769.1"/>
    <property type="gene ID" value="ENSG00000212993.6"/>
</dbReference>
<dbReference type="GeneID" id="5462"/>
<dbReference type="KEGG" id="hsa:5462"/>
<dbReference type="MANE-Select" id="ENST00000696633.1">
    <property type="protein sequence ID" value="ENSP00000512769.1"/>
    <property type="RefSeq nucleotide sequence ID" value="NM_001159542.3"/>
    <property type="RefSeq protein sequence ID" value="NP_001153014.1"/>
</dbReference>
<dbReference type="UCSC" id="uc003ysf.4">
    <property type="organism name" value="human"/>
</dbReference>
<dbReference type="AGR" id="HGNC:9223"/>
<dbReference type="CTD" id="5462"/>
<dbReference type="DisGeNET" id="5462"/>
<dbReference type="GeneCards" id="POU5F1B"/>
<dbReference type="HGNC" id="HGNC:9223">
    <property type="gene designation" value="POU5F1B"/>
</dbReference>
<dbReference type="HPA" id="ENSG00000212993">
    <property type="expression patterns" value="Tissue enhanced (choroid)"/>
</dbReference>
<dbReference type="MIM" id="615739">
    <property type="type" value="gene"/>
</dbReference>
<dbReference type="neXtProt" id="NX_Q06416"/>
<dbReference type="OpenTargets" id="ENSG00000212993"/>
<dbReference type="PharmGKB" id="PA33547"/>
<dbReference type="VEuPathDB" id="HostDB:ENSG00000212993"/>
<dbReference type="eggNOG" id="KOG3802">
    <property type="taxonomic scope" value="Eukaryota"/>
</dbReference>
<dbReference type="GeneTree" id="ENSGT00940000155046"/>
<dbReference type="HOGENOM" id="CLU_066243_0_0_1"/>
<dbReference type="InParanoid" id="Q06416"/>
<dbReference type="OMA" id="YTQADMG"/>
<dbReference type="OrthoDB" id="6358449at2759"/>
<dbReference type="PAN-GO" id="Q06416">
    <property type="GO annotations" value="3 GO annotations based on evolutionary models"/>
</dbReference>
<dbReference type="PhylomeDB" id="Q06416"/>
<dbReference type="TreeFam" id="TF316413"/>
<dbReference type="PathwayCommons" id="Q06416"/>
<dbReference type="BioGRID-ORCS" id="5462">
    <property type="hits" value="315 hits in 1072 CRISPR screens"/>
</dbReference>
<dbReference type="GenomeRNAi" id="5462"/>
<dbReference type="Pharos" id="Q06416">
    <property type="development level" value="Tbio"/>
</dbReference>
<dbReference type="Proteomes" id="UP000005640">
    <property type="component" value="Chromosome 8"/>
</dbReference>
<dbReference type="RNAct" id="Q06416">
    <property type="molecule type" value="protein"/>
</dbReference>
<dbReference type="Bgee" id="ENSG00000212993">
    <property type="expression patterns" value="Expressed in primordial germ cell in gonad and 77 other cell types or tissues"/>
</dbReference>
<dbReference type="GO" id="GO:0000785">
    <property type="term" value="C:chromatin"/>
    <property type="evidence" value="ECO:0000247"/>
    <property type="project" value="NTNU_SB"/>
</dbReference>
<dbReference type="GO" id="GO:0005829">
    <property type="term" value="C:cytosol"/>
    <property type="evidence" value="ECO:0000314"/>
    <property type="project" value="HPA"/>
</dbReference>
<dbReference type="GO" id="GO:0005739">
    <property type="term" value="C:mitochondrion"/>
    <property type="evidence" value="ECO:0000314"/>
    <property type="project" value="HPA"/>
</dbReference>
<dbReference type="GO" id="GO:0005654">
    <property type="term" value="C:nucleoplasm"/>
    <property type="evidence" value="ECO:0000314"/>
    <property type="project" value="HPA"/>
</dbReference>
<dbReference type="GO" id="GO:0003700">
    <property type="term" value="F:DNA-binding transcription factor activity"/>
    <property type="evidence" value="ECO:0000304"/>
    <property type="project" value="UniProtKB"/>
</dbReference>
<dbReference type="GO" id="GO:0000981">
    <property type="term" value="F:DNA-binding transcription factor activity, RNA polymerase II-specific"/>
    <property type="evidence" value="ECO:0000247"/>
    <property type="project" value="NTNU_SB"/>
</dbReference>
<dbReference type="GO" id="GO:0000978">
    <property type="term" value="F:RNA polymerase II cis-regulatory region sequence-specific DNA binding"/>
    <property type="evidence" value="ECO:0000318"/>
    <property type="project" value="GO_Central"/>
</dbReference>
<dbReference type="GO" id="GO:0006355">
    <property type="term" value="P:regulation of DNA-templated transcription"/>
    <property type="evidence" value="ECO:0000303"/>
    <property type="project" value="UniProtKB"/>
</dbReference>
<dbReference type="GO" id="GO:0006357">
    <property type="term" value="P:regulation of transcription by RNA polymerase II"/>
    <property type="evidence" value="ECO:0000318"/>
    <property type="project" value="GO_Central"/>
</dbReference>
<dbReference type="CDD" id="cd00086">
    <property type="entry name" value="homeodomain"/>
    <property type="match status" value="1"/>
</dbReference>
<dbReference type="FunFam" id="1.10.10.60:FF:000161">
    <property type="entry name" value="POU domain protein"/>
    <property type="match status" value="1"/>
</dbReference>
<dbReference type="FunFam" id="1.10.260.40:FF:000022">
    <property type="entry name" value="POU domain protein"/>
    <property type="match status" value="1"/>
</dbReference>
<dbReference type="Gene3D" id="1.10.10.60">
    <property type="entry name" value="Homeodomain-like"/>
    <property type="match status" value="1"/>
</dbReference>
<dbReference type="Gene3D" id="1.10.260.40">
    <property type="entry name" value="lambda repressor-like DNA-binding domains"/>
    <property type="match status" value="1"/>
</dbReference>
<dbReference type="InterPro" id="IPR001356">
    <property type="entry name" value="HD"/>
</dbReference>
<dbReference type="InterPro" id="IPR017970">
    <property type="entry name" value="Homeobox_CS"/>
</dbReference>
<dbReference type="InterPro" id="IPR009057">
    <property type="entry name" value="Homeodomain-like_sf"/>
</dbReference>
<dbReference type="InterPro" id="IPR010982">
    <property type="entry name" value="Lambda_DNA-bd_dom_sf"/>
</dbReference>
<dbReference type="InterPro" id="IPR013847">
    <property type="entry name" value="POU"/>
</dbReference>
<dbReference type="InterPro" id="IPR000327">
    <property type="entry name" value="POU_dom"/>
</dbReference>
<dbReference type="InterPro" id="IPR050255">
    <property type="entry name" value="POU_domain_TF"/>
</dbReference>
<dbReference type="PANTHER" id="PTHR11636">
    <property type="entry name" value="POU DOMAIN"/>
    <property type="match status" value="1"/>
</dbReference>
<dbReference type="PANTHER" id="PTHR11636:SF86">
    <property type="entry name" value="POU DOMAIN, CLASS 5, TRANSCRIPTION FACTOR 1-RELATED"/>
    <property type="match status" value="1"/>
</dbReference>
<dbReference type="Pfam" id="PF00046">
    <property type="entry name" value="Homeodomain"/>
    <property type="match status" value="1"/>
</dbReference>
<dbReference type="Pfam" id="PF00157">
    <property type="entry name" value="Pou"/>
    <property type="match status" value="1"/>
</dbReference>
<dbReference type="PRINTS" id="PR00028">
    <property type="entry name" value="POUDOMAIN"/>
</dbReference>
<dbReference type="SMART" id="SM00389">
    <property type="entry name" value="HOX"/>
    <property type="match status" value="1"/>
</dbReference>
<dbReference type="SMART" id="SM00352">
    <property type="entry name" value="POU"/>
    <property type="match status" value="1"/>
</dbReference>
<dbReference type="SUPFAM" id="SSF46689">
    <property type="entry name" value="Homeodomain-like"/>
    <property type="match status" value="1"/>
</dbReference>
<dbReference type="SUPFAM" id="SSF47413">
    <property type="entry name" value="lambda repressor-like DNA-binding domains"/>
    <property type="match status" value="1"/>
</dbReference>
<dbReference type="PROSITE" id="PS00027">
    <property type="entry name" value="HOMEOBOX_1"/>
    <property type="match status" value="1"/>
</dbReference>
<dbReference type="PROSITE" id="PS50071">
    <property type="entry name" value="HOMEOBOX_2"/>
    <property type="match status" value="1"/>
</dbReference>
<dbReference type="PROSITE" id="PS00035">
    <property type="entry name" value="POU_1"/>
    <property type="match status" value="1"/>
</dbReference>
<dbReference type="PROSITE" id="PS00465">
    <property type="entry name" value="POU_2"/>
    <property type="match status" value="1"/>
</dbReference>
<dbReference type="PROSITE" id="PS51179">
    <property type="entry name" value="POU_3"/>
    <property type="match status" value="1"/>
</dbReference>
<reference key="1">
    <citation type="journal article" date="1992" name="Nucleic Acids Res.">
        <title>Human Oct3 gene family: cDNA sequences, alternative splicing, gene organization, chromosomal location, and expression at low levels in adult tissues.</title>
        <authorList>
            <person name="Takeda J."/>
            <person name="Seino S."/>
            <person name="Bell G.I."/>
        </authorList>
    </citation>
    <scope>NUCLEOTIDE SEQUENCE [GENOMIC DNA]</scope>
    <source>
        <tissue>Liver</tissue>
    </source>
</reference>
<reference key="2">
    <citation type="journal article" date="2005" name="PLoS Biol.">
        <title>Emergence of young human genes after a burst of retroposition in primates.</title>
        <authorList>
            <person name="Marques A.C."/>
            <person name="Dupanloup I."/>
            <person name="Vinckenbosch N."/>
            <person name="Reymond A."/>
            <person name="Kaessmann H."/>
        </authorList>
    </citation>
    <scope>NUCLEOTIDE SEQUENCE [GENOMIC DNA]</scope>
</reference>
<reference key="3">
    <citation type="submission" date="2000-05" db="EMBL/GenBank/DDBJ databases">
        <title>Identification and expression analysis of novel intron-less human POU5F1/OCT3 related POU domain genes.</title>
        <authorList>
            <person name="van Roozendaal K.E.P."/>
            <person name="Gillis A.J.M."/>
            <person name="van Asseldonk M."/>
            <person name="Oosterhuis J.W."/>
            <person name="Looijenga L.H.J."/>
            <person name="van Zoelen E.J.J."/>
        </authorList>
    </citation>
    <scope>NUCLEOTIDE SEQUENCE [MRNA]</scope>
    <scope>VARIANTS THR-182 AND ASP-214</scope>
    <source>
        <tissue>Kidney</tissue>
    </source>
</reference>
<reference key="4">
    <citation type="submission" date="2006-04" db="EMBL/GenBank/DDBJ databases">
        <title>Differential expression of Oct-4 gene and pseudogene in normal and breast cancer cells.</title>
        <authorList>
            <person name="Zhao F.-Q."/>
            <person name="Buss K."/>
        </authorList>
    </citation>
    <scope>NUCLEOTIDE SEQUENCE [MRNA]</scope>
    <source>
        <tissue>Mammary cancer</tissue>
    </source>
</reference>
<reference key="5">
    <citation type="journal article" date="2011" name="J. Pathol.">
        <title>Expression of OCT4 pseudogenes in human tumours: lessons from glioma and breast carcinoma.</title>
        <authorList>
            <person name="Zhao S."/>
            <person name="Yuan Q."/>
            <person name="Hao H."/>
            <person name="Guo Y."/>
            <person name="Liu S."/>
            <person name="Zhang Y."/>
            <person name="Wang J."/>
            <person name="Liu H."/>
            <person name="Wang F."/>
            <person name="Liu K."/>
            <person name="Ling E.A."/>
            <person name="Hao A."/>
        </authorList>
    </citation>
    <scope>NUCLEOTIDE SEQUENCE [MRNA]</scope>
    <scope>VARIANTS ARG-33; GLU-176; THR-182; ASP-214 AND GLN-238</scope>
    <scope>TISSUE SPECIFICITY</scope>
    <source>
        <tissue>Glial tumor</tissue>
        <tissue>Mammary cancer</tissue>
    </source>
</reference>
<reference key="6">
    <citation type="journal article" date="2006" name="Nature">
        <title>DNA sequence and analysis of human chromosome 8.</title>
        <authorList>
            <person name="Nusbaum C."/>
            <person name="Mikkelsen T.S."/>
            <person name="Zody M.C."/>
            <person name="Asakawa S."/>
            <person name="Taudien S."/>
            <person name="Garber M."/>
            <person name="Kodira C.D."/>
            <person name="Schueler M.G."/>
            <person name="Shimizu A."/>
            <person name="Whittaker C.A."/>
            <person name="Chang J.L."/>
            <person name="Cuomo C.A."/>
            <person name="Dewar K."/>
            <person name="FitzGerald M.G."/>
            <person name="Yang X."/>
            <person name="Allen N.R."/>
            <person name="Anderson S."/>
            <person name="Asakawa T."/>
            <person name="Blechschmidt K."/>
            <person name="Bloom T."/>
            <person name="Borowsky M.L."/>
            <person name="Butler J."/>
            <person name="Cook A."/>
            <person name="Corum B."/>
            <person name="DeArellano K."/>
            <person name="DeCaprio D."/>
            <person name="Dooley K.T."/>
            <person name="Dorris L. III"/>
            <person name="Engels R."/>
            <person name="Gloeckner G."/>
            <person name="Hafez N."/>
            <person name="Hagopian D.S."/>
            <person name="Hall J.L."/>
            <person name="Ishikawa S.K."/>
            <person name="Jaffe D.B."/>
            <person name="Kamat A."/>
            <person name="Kudoh J."/>
            <person name="Lehmann R."/>
            <person name="Lokitsang T."/>
            <person name="Macdonald P."/>
            <person name="Major J.E."/>
            <person name="Matthews C.D."/>
            <person name="Mauceli E."/>
            <person name="Menzel U."/>
            <person name="Mihalev A.H."/>
            <person name="Minoshima S."/>
            <person name="Murayama Y."/>
            <person name="Naylor J.W."/>
            <person name="Nicol R."/>
            <person name="Nguyen C."/>
            <person name="O'Leary S.B."/>
            <person name="O'Neill K."/>
            <person name="Parker S.C.J."/>
            <person name="Polley A."/>
            <person name="Raymond C.K."/>
            <person name="Reichwald K."/>
            <person name="Rodriguez J."/>
            <person name="Sasaki T."/>
            <person name="Schilhabel M."/>
            <person name="Siddiqui R."/>
            <person name="Smith C.L."/>
            <person name="Sneddon T.P."/>
            <person name="Talamas J.A."/>
            <person name="Tenzin P."/>
            <person name="Topham K."/>
            <person name="Venkataraman V."/>
            <person name="Wen G."/>
            <person name="Yamazaki S."/>
            <person name="Young S.K."/>
            <person name="Zeng Q."/>
            <person name="Zimmer A.R."/>
            <person name="Rosenthal A."/>
            <person name="Birren B.W."/>
            <person name="Platzer M."/>
            <person name="Shimizu N."/>
            <person name="Lander E.S."/>
        </authorList>
    </citation>
    <scope>NUCLEOTIDE SEQUENCE [LARGE SCALE GENOMIC DNA]</scope>
</reference>
<reference key="7">
    <citation type="journal article" date="2005" name="Biochem. Biophys. Res. Commun.">
        <title>Oct4 pseudogenes are transcribed in cancers.</title>
        <authorList>
            <person name="Suo G."/>
            <person name="Han J."/>
            <person name="Wang X."/>
            <person name="Zhang J."/>
            <person name="Zhao Y."/>
            <person name="Zhao Y."/>
            <person name="Dai J."/>
        </authorList>
    </citation>
    <scope>TISSUE SPECIFICITY</scope>
</reference>
<reference key="8">
    <citation type="journal article" date="2008" name="Oncol. Rep.">
        <title>The POU5F1P1 pseudogene encodes a putative protein similar to POU5F1 isoform 1.</title>
        <authorList>
            <person name="Panagopoulos I."/>
            <person name="Moeller E."/>
            <person name="Collin A."/>
            <person name="Mertens F."/>
        </authorList>
    </citation>
    <scope>FUNCTION</scope>
    <scope>SUBCELLULAR LOCATION</scope>
</reference>
<reference key="9">
    <citation type="journal article" date="2010" name="Prostate">
        <title>POU5F1P1, a putative cancer susceptibility gene, is overexpressed in prostatic carcinoma.</title>
        <authorList>
            <person name="Kastler S."/>
            <person name="Honold L."/>
            <person name="Luedeke M."/>
            <person name="Kuefer R."/>
            <person name="Moeller P."/>
            <person name="Hoegel J."/>
            <person name="Vogel W."/>
            <person name="Maier C."/>
            <person name="Assum G."/>
        </authorList>
    </citation>
    <scope>SUBCELLULAR LOCATION</scope>
    <scope>TISSUE SPECIFICITY</scope>
</reference>